<feature type="chain" id="PRO_1000192439" description="Transcription antitermination protein NusB">
    <location>
        <begin position="1"/>
        <end position="139"/>
    </location>
</feature>
<reference key="1">
    <citation type="journal article" date="2009" name="PLoS Genet.">
        <title>Organised genome dynamics in the Escherichia coli species results in highly diverse adaptive paths.</title>
        <authorList>
            <person name="Touchon M."/>
            <person name="Hoede C."/>
            <person name="Tenaillon O."/>
            <person name="Barbe V."/>
            <person name="Baeriswyl S."/>
            <person name="Bidet P."/>
            <person name="Bingen E."/>
            <person name="Bonacorsi S."/>
            <person name="Bouchier C."/>
            <person name="Bouvet O."/>
            <person name="Calteau A."/>
            <person name="Chiapello H."/>
            <person name="Clermont O."/>
            <person name="Cruveiller S."/>
            <person name="Danchin A."/>
            <person name="Diard M."/>
            <person name="Dossat C."/>
            <person name="Karoui M.E."/>
            <person name="Frapy E."/>
            <person name="Garry L."/>
            <person name="Ghigo J.M."/>
            <person name="Gilles A.M."/>
            <person name="Johnson J."/>
            <person name="Le Bouguenec C."/>
            <person name="Lescat M."/>
            <person name="Mangenot S."/>
            <person name="Martinez-Jehanne V."/>
            <person name="Matic I."/>
            <person name="Nassif X."/>
            <person name="Oztas S."/>
            <person name="Petit M.A."/>
            <person name="Pichon C."/>
            <person name="Rouy Z."/>
            <person name="Ruf C.S."/>
            <person name="Schneider D."/>
            <person name="Tourret J."/>
            <person name="Vacherie B."/>
            <person name="Vallenet D."/>
            <person name="Medigue C."/>
            <person name="Rocha E.P.C."/>
            <person name="Denamur E."/>
        </authorList>
    </citation>
    <scope>NUCLEOTIDE SEQUENCE [LARGE SCALE GENOMIC DNA]</scope>
    <source>
        <strain>55989 / EAEC</strain>
    </source>
</reference>
<accession>B7L650</accession>
<dbReference type="EMBL" id="CU928145">
    <property type="protein sequence ID" value="CAU96300.1"/>
    <property type="molecule type" value="Genomic_DNA"/>
</dbReference>
<dbReference type="RefSeq" id="WP_000801125.1">
    <property type="nucleotide sequence ID" value="NZ_CP028304.1"/>
</dbReference>
<dbReference type="SMR" id="B7L650"/>
<dbReference type="GeneID" id="93777044"/>
<dbReference type="KEGG" id="eck:EC55989_0426"/>
<dbReference type="HOGENOM" id="CLU_087843_4_1_6"/>
<dbReference type="Proteomes" id="UP000000746">
    <property type="component" value="Chromosome"/>
</dbReference>
<dbReference type="GO" id="GO:0005829">
    <property type="term" value="C:cytosol"/>
    <property type="evidence" value="ECO:0007669"/>
    <property type="project" value="TreeGrafter"/>
</dbReference>
<dbReference type="GO" id="GO:0003723">
    <property type="term" value="F:RNA binding"/>
    <property type="evidence" value="ECO:0007669"/>
    <property type="project" value="UniProtKB-UniRule"/>
</dbReference>
<dbReference type="GO" id="GO:0006353">
    <property type="term" value="P:DNA-templated transcription termination"/>
    <property type="evidence" value="ECO:0007669"/>
    <property type="project" value="UniProtKB-UniRule"/>
</dbReference>
<dbReference type="GO" id="GO:0031564">
    <property type="term" value="P:transcription antitermination"/>
    <property type="evidence" value="ECO:0007669"/>
    <property type="project" value="UniProtKB-KW"/>
</dbReference>
<dbReference type="CDD" id="cd00619">
    <property type="entry name" value="Terminator_NusB"/>
    <property type="match status" value="1"/>
</dbReference>
<dbReference type="FunFam" id="1.10.940.10:FF:000001">
    <property type="entry name" value="Transcription antitermination factor NusB"/>
    <property type="match status" value="1"/>
</dbReference>
<dbReference type="Gene3D" id="1.10.940.10">
    <property type="entry name" value="NusB-like"/>
    <property type="match status" value="1"/>
</dbReference>
<dbReference type="HAMAP" id="MF_00073">
    <property type="entry name" value="NusB"/>
    <property type="match status" value="1"/>
</dbReference>
<dbReference type="InterPro" id="IPR035926">
    <property type="entry name" value="NusB-like_sf"/>
</dbReference>
<dbReference type="InterPro" id="IPR011605">
    <property type="entry name" value="NusB_fam"/>
</dbReference>
<dbReference type="InterPro" id="IPR006027">
    <property type="entry name" value="NusB_RsmB_TIM44"/>
</dbReference>
<dbReference type="NCBIfam" id="TIGR01951">
    <property type="entry name" value="nusB"/>
    <property type="match status" value="1"/>
</dbReference>
<dbReference type="PANTHER" id="PTHR11078:SF3">
    <property type="entry name" value="ANTITERMINATION NUSB DOMAIN-CONTAINING PROTEIN"/>
    <property type="match status" value="1"/>
</dbReference>
<dbReference type="PANTHER" id="PTHR11078">
    <property type="entry name" value="N UTILIZATION SUBSTANCE PROTEIN B-RELATED"/>
    <property type="match status" value="1"/>
</dbReference>
<dbReference type="Pfam" id="PF01029">
    <property type="entry name" value="NusB"/>
    <property type="match status" value="1"/>
</dbReference>
<dbReference type="SUPFAM" id="SSF48013">
    <property type="entry name" value="NusB-like"/>
    <property type="match status" value="1"/>
</dbReference>
<evidence type="ECO:0000255" key="1">
    <source>
        <dbReference type="HAMAP-Rule" id="MF_00073"/>
    </source>
</evidence>
<keyword id="KW-1185">Reference proteome</keyword>
<keyword id="KW-0694">RNA-binding</keyword>
<keyword id="KW-0804">Transcription</keyword>
<keyword id="KW-0889">Transcription antitermination</keyword>
<keyword id="KW-0805">Transcription regulation</keyword>
<gene>
    <name evidence="1" type="primary">nusB</name>
    <name type="ordered locus">EC55989_0426</name>
</gene>
<protein>
    <recommendedName>
        <fullName evidence="1">Transcription antitermination protein NusB</fullName>
    </recommendedName>
    <alternativeName>
        <fullName evidence="1">Antitermination factor NusB</fullName>
    </alternativeName>
</protein>
<sequence length="139" mass="15689">MKPAARRRARECAVQALYSWQLSQNDIADVEYQFLAEQDVKDVDVLYFRELLAGVATNTAYLDGLMKPYLSRLLEELGQVEKAVLRIALYELSKRSDVPYKVAINEAIELAKSFGAEDSHKFVNGVLDKAAPVIRPNKK</sequence>
<proteinExistence type="inferred from homology"/>
<organism>
    <name type="scientific">Escherichia coli (strain 55989 / EAEC)</name>
    <dbReference type="NCBI Taxonomy" id="585055"/>
    <lineage>
        <taxon>Bacteria</taxon>
        <taxon>Pseudomonadati</taxon>
        <taxon>Pseudomonadota</taxon>
        <taxon>Gammaproteobacteria</taxon>
        <taxon>Enterobacterales</taxon>
        <taxon>Enterobacteriaceae</taxon>
        <taxon>Escherichia</taxon>
    </lineage>
</organism>
<comment type="function">
    <text evidence="1">Involved in transcription antitermination. Required for transcription of ribosomal RNA (rRNA) genes. Binds specifically to the boxA antiterminator sequence of the ribosomal RNA (rrn) operons.</text>
</comment>
<comment type="similarity">
    <text evidence="1">Belongs to the NusB family.</text>
</comment>
<name>NUSB_ECO55</name>